<protein>
    <recommendedName>
        <fullName evidence="1">Ribosomal RNA small subunit methyltransferase G</fullName>
        <ecNumber evidence="1">2.1.1.-</ecNumber>
    </recommendedName>
    <alternativeName>
        <fullName evidence="1">16S rRNA 7-methylguanosine methyltransferase</fullName>
        <shortName evidence="1">16S rRNA m7G methyltransferase</shortName>
    </alternativeName>
</protein>
<name>RSMG_RHOJR</name>
<keyword id="KW-0963">Cytoplasm</keyword>
<keyword id="KW-0489">Methyltransferase</keyword>
<keyword id="KW-0698">rRNA processing</keyword>
<keyword id="KW-0949">S-adenosyl-L-methionine</keyword>
<keyword id="KW-0808">Transferase</keyword>
<reference key="1">
    <citation type="journal article" date="2006" name="Proc. Natl. Acad. Sci. U.S.A.">
        <title>The complete genome of Rhodococcus sp. RHA1 provides insights into a catabolic powerhouse.</title>
        <authorList>
            <person name="McLeod M.P."/>
            <person name="Warren R.L."/>
            <person name="Hsiao W.W.L."/>
            <person name="Araki N."/>
            <person name="Myhre M."/>
            <person name="Fernandes C."/>
            <person name="Miyazawa D."/>
            <person name="Wong W."/>
            <person name="Lillquist A.L."/>
            <person name="Wang D."/>
            <person name="Dosanjh M."/>
            <person name="Hara H."/>
            <person name="Petrescu A."/>
            <person name="Morin R.D."/>
            <person name="Yang G."/>
            <person name="Stott J.M."/>
            <person name="Schein J.E."/>
            <person name="Shin H."/>
            <person name="Smailus D."/>
            <person name="Siddiqui A.S."/>
            <person name="Marra M.A."/>
            <person name="Jones S.J.M."/>
            <person name="Holt R."/>
            <person name="Brinkman F.S.L."/>
            <person name="Miyauchi K."/>
            <person name="Fukuda M."/>
            <person name="Davies J.E."/>
            <person name="Mohn W.W."/>
            <person name="Eltis L.D."/>
        </authorList>
    </citation>
    <scope>NUCLEOTIDE SEQUENCE [LARGE SCALE GENOMIC DNA]</scope>
    <source>
        <strain>RHA1</strain>
    </source>
</reference>
<accession>Q0SAH7</accession>
<feature type="chain" id="PRO_0000335413" description="Ribosomal RNA small subunit methyltransferase G">
    <location>
        <begin position="1"/>
        <end position="227"/>
    </location>
</feature>
<feature type="binding site" evidence="1">
    <location>
        <position position="81"/>
    </location>
    <ligand>
        <name>S-adenosyl-L-methionine</name>
        <dbReference type="ChEBI" id="CHEBI:59789"/>
    </ligand>
</feature>
<feature type="binding site" evidence="1">
    <location>
        <position position="86"/>
    </location>
    <ligand>
        <name>S-adenosyl-L-methionine</name>
        <dbReference type="ChEBI" id="CHEBI:59789"/>
    </ligand>
</feature>
<feature type="binding site" evidence="1">
    <location>
        <begin position="131"/>
        <end position="132"/>
    </location>
    <ligand>
        <name>S-adenosyl-L-methionine</name>
        <dbReference type="ChEBI" id="CHEBI:59789"/>
    </ligand>
</feature>
<feature type="binding site" evidence="1">
    <location>
        <position position="149"/>
    </location>
    <ligand>
        <name>S-adenosyl-L-methionine</name>
        <dbReference type="ChEBI" id="CHEBI:59789"/>
    </ligand>
</feature>
<gene>
    <name evidence="1" type="primary">rsmG</name>
    <name type="ordered locus">RHA1_ro03656</name>
</gene>
<sequence>MFHVEPNGGEPAEWDEQAAARQVFGERFDIAERYYKSLASDGVERGLIGPREVPRLWERHLLNCAVVGELIAEGESVVDVGSGAGLPGIPLAIARPDLRITLVEPLLRRSVYLAEFVESNGLDVLVVRGRAEESGVVKEAGGADVVTSRAVAPLEKLAKWSLPLIHEHGRMLALKGSSAAEEISRDRASLTRLGAGKLDIVECGVGLLPVPTVVVRAERVPKRRQRR</sequence>
<comment type="function">
    <text evidence="1">Specifically methylates the N7 position of guanine in position 518 of 16S rRNA.</text>
</comment>
<comment type="subcellular location">
    <subcellularLocation>
        <location evidence="1">Cytoplasm</location>
    </subcellularLocation>
</comment>
<comment type="similarity">
    <text evidence="1">Belongs to the methyltransferase superfamily. RNA methyltransferase RsmG family.</text>
</comment>
<comment type="sequence caution" evidence="2">
    <conflict type="erroneous initiation">
        <sequence resource="EMBL-CDS" id="ABG95459"/>
    </conflict>
</comment>
<dbReference type="EC" id="2.1.1.-" evidence="1"/>
<dbReference type="EMBL" id="CP000431">
    <property type="protein sequence ID" value="ABG95459.1"/>
    <property type="status" value="ALT_INIT"/>
    <property type="molecule type" value="Genomic_DNA"/>
</dbReference>
<dbReference type="RefSeq" id="WP_029539744.1">
    <property type="nucleotide sequence ID" value="NC_008268.1"/>
</dbReference>
<dbReference type="SMR" id="Q0SAH7"/>
<dbReference type="KEGG" id="rha:RHA1_ro03656"/>
<dbReference type="eggNOG" id="COG0357">
    <property type="taxonomic scope" value="Bacteria"/>
</dbReference>
<dbReference type="HOGENOM" id="CLU_065341_5_0_11"/>
<dbReference type="OrthoDB" id="9808773at2"/>
<dbReference type="Proteomes" id="UP000008710">
    <property type="component" value="Chromosome"/>
</dbReference>
<dbReference type="GO" id="GO:0005829">
    <property type="term" value="C:cytosol"/>
    <property type="evidence" value="ECO:0007669"/>
    <property type="project" value="TreeGrafter"/>
</dbReference>
<dbReference type="GO" id="GO:0070043">
    <property type="term" value="F:rRNA (guanine-N7-)-methyltransferase activity"/>
    <property type="evidence" value="ECO:0007669"/>
    <property type="project" value="UniProtKB-UniRule"/>
</dbReference>
<dbReference type="Gene3D" id="3.40.50.150">
    <property type="entry name" value="Vaccinia Virus protein VP39"/>
    <property type="match status" value="1"/>
</dbReference>
<dbReference type="HAMAP" id="MF_00074">
    <property type="entry name" value="16SrRNA_methyltr_G"/>
    <property type="match status" value="1"/>
</dbReference>
<dbReference type="InterPro" id="IPR003682">
    <property type="entry name" value="rRNA_ssu_MeTfrase_G"/>
</dbReference>
<dbReference type="InterPro" id="IPR029063">
    <property type="entry name" value="SAM-dependent_MTases_sf"/>
</dbReference>
<dbReference type="NCBIfam" id="TIGR00138">
    <property type="entry name" value="rsmG_gidB"/>
    <property type="match status" value="1"/>
</dbReference>
<dbReference type="PANTHER" id="PTHR31760">
    <property type="entry name" value="S-ADENOSYL-L-METHIONINE-DEPENDENT METHYLTRANSFERASES SUPERFAMILY PROTEIN"/>
    <property type="match status" value="1"/>
</dbReference>
<dbReference type="PANTHER" id="PTHR31760:SF0">
    <property type="entry name" value="S-ADENOSYL-L-METHIONINE-DEPENDENT METHYLTRANSFERASES SUPERFAMILY PROTEIN"/>
    <property type="match status" value="1"/>
</dbReference>
<dbReference type="Pfam" id="PF02527">
    <property type="entry name" value="GidB"/>
    <property type="match status" value="1"/>
</dbReference>
<dbReference type="SUPFAM" id="SSF53335">
    <property type="entry name" value="S-adenosyl-L-methionine-dependent methyltransferases"/>
    <property type="match status" value="1"/>
</dbReference>
<evidence type="ECO:0000255" key="1">
    <source>
        <dbReference type="HAMAP-Rule" id="MF_00074"/>
    </source>
</evidence>
<evidence type="ECO:0000305" key="2"/>
<organism>
    <name type="scientific">Rhodococcus jostii (strain RHA1)</name>
    <dbReference type="NCBI Taxonomy" id="101510"/>
    <lineage>
        <taxon>Bacteria</taxon>
        <taxon>Bacillati</taxon>
        <taxon>Actinomycetota</taxon>
        <taxon>Actinomycetes</taxon>
        <taxon>Mycobacteriales</taxon>
        <taxon>Nocardiaceae</taxon>
        <taxon>Rhodococcus</taxon>
    </lineage>
</organism>
<proteinExistence type="inferred from homology"/>